<keyword id="KW-0238">DNA-binding</keyword>
<keyword id="KW-1185">Reference proteome</keyword>
<keyword id="KW-0677">Repeat</keyword>
<keyword id="KW-0804">Transcription</keyword>
<keyword id="KW-0805">Transcription regulation</keyword>
<evidence type="ECO:0000305" key="1"/>
<protein>
    <recommendedName>
        <fullName>TATA-box-binding protein</fullName>
    </recommendedName>
    <alternativeName>
        <fullName>Box A-binding protein</fullName>
        <shortName>BAP</shortName>
    </alternativeName>
    <alternativeName>
        <fullName>TATA sequence-binding protein</fullName>
        <shortName>TBP</shortName>
    </alternativeName>
    <alternativeName>
        <fullName>TATA-box factor</fullName>
    </alternativeName>
</protein>
<dbReference type="EMBL" id="D50018">
    <property type="protein sequence ID" value="BAA08743.1"/>
    <property type="molecule type" value="Genomic_DNA"/>
</dbReference>
<dbReference type="EMBL" id="AP006878">
    <property type="protein sequence ID" value="BAD84321.1"/>
    <property type="molecule type" value="Genomic_DNA"/>
</dbReference>
<dbReference type="RefSeq" id="WP_011249087.1">
    <property type="nucleotide sequence ID" value="NC_006624.1"/>
</dbReference>
<dbReference type="SMR" id="Q52366"/>
<dbReference type="FunCoup" id="Q52366">
    <property type="interactions" value="143"/>
</dbReference>
<dbReference type="STRING" id="69014.TK0132"/>
<dbReference type="EnsemblBacteria" id="BAD84321">
    <property type="protein sequence ID" value="BAD84321"/>
    <property type="gene ID" value="TK0132"/>
</dbReference>
<dbReference type="GeneID" id="78446637"/>
<dbReference type="KEGG" id="tko:TK0132"/>
<dbReference type="PATRIC" id="fig|69014.16.peg.132"/>
<dbReference type="eggNOG" id="arCOG01764">
    <property type="taxonomic scope" value="Archaea"/>
</dbReference>
<dbReference type="HOGENOM" id="CLU_060161_4_3_2"/>
<dbReference type="InParanoid" id="Q52366"/>
<dbReference type="OrthoDB" id="350539at2157"/>
<dbReference type="PhylomeDB" id="Q52366"/>
<dbReference type="Proteomes" id="UP000000536">
    <property type="component" value="Chromosome"/>
</dbReference>
<dbReference type="GO" id="GO:0003677">
    <property type="term" value="F:DNA binding"/>
    <property type="evidence" value="ECO:0007669"/>
    <property type="project" value="UniProtKB-KW"/>
</dbReference>
<dbReference type="GO" id="GO:0003700">
    <property type="term" value="F:DNA-binding transcription factor activity"/>
    <property type="evidence" value="ECO:0007669"/>
    <property type="project" value="UniProtKB-UniRule"/>
</dbReference>
<dbReference type="GO" id="GO:0140223">
    <property type="term" value="F:general transcription initiation factor activity"/>
    <property type="evidence" value="ECO:0000318"/>
    <property type="project" value="GO_Central"/>
</dbReference>
<dbReference type="GO" id="GO:0006352">
    <property type="term" value="P:DNA-templated transcription initiation"/>
    <property type="evidence" value="ECO:0000318"/>
    <property type="project" value="GO_Central"/>
</dbReference>
<dbReference type="CDD" id="cd04518">
    <property type="entry name" value="TBP_archaea"/>
    <property type="match status" value="1"/>
</dbReference>
<dbReference type="FunFam" id="3.30.310.10:FF:000007">
    <property type="entry name" value="TATA-box-binding protein"/>
    <property type="match status" value="1"/>
</dbReference>
<dbReference type="FunFam" id="3.30.310.10:FF:000010">
    <property type="entry name" value="TATA-box-binding protein"/>
    <property type="match status" value="1"/>
</dbReference>
<dbReference type="Gene3D" id="3.30.310.10">
    <property type="entry name" value="TATA-Binding Protein"/>
    <property type="match status" value="2"/>
</dbReference>
<dbReference type="HAMAP" id="MF_00408">
    <property type="entry name" value="TATA_bind_prot_arch"/>
    <property type="match status" value="1"/>
</dbReference>
<dbReference type="InterPro" id="IPR000814">
    <property type="entry name" value="TBP"/>
</dbReference>
<dbReference type="InterPro" id="IPR033711">
    <property type="entry name" value="TBP_archaea"/>
</dbReference>
<dbReference type="InterPro" id="IPR030491">
    <property type="entry name" value="TBP_CS"/>
</dbReference>
<dbReference type="InterPro" id="IPR012295">
    <property type="entry name" value="TBP_dom_sf"/>
</dbReference>
<dbReference type="NCBIfam" id="NF001593">
    <property type="entry name" value="PRK00394.1-2"/>
    <property type="match status" value="1"/>
</dbReference>
<dbReference type="NCBIfam" id="NF001594">
    <property type="entry name" value="PRK00394.1-3"/>
    <property type="match status" value="1"/>
</dbReference>
<dbReference type="PANTHER" id="PTHR10126">
    <property type="entry name" value="TATA-BOX BINDING PROTEIN"/>
    <property type="match status" value="1"/>
</dbReference>
<dbReference type="Pfam" id="PF00352">
    <property type="entry name" value="TBP"/>
    <property type="match status" value="2"/>
</dbReference>
<dbReference type="PRINTS" id="PR00686">
    <property type="entry name" value="TIFACTORIID"/>
</dbReference>
<dbReference type="SUPFAM" id="SSF55945">
    <property type="entry name" value="TATA-box binding protein-like"/>
    <property type="match status" value="2"/>
</dbReference>
<dbReference type="PROSITE" id="PS00351">
    <property type="entry name" value="TFIID"/>
    <property type="match status" value="2"/>
</dbReference>
<name>TBP_THEKO</name>
<organism>
    <name type="scientific">Thermococcus kodakarensis (strain ATCC BAA-918 / JCM 12380 / KOD1)</name>
    <name type="common">Pyrococcus kodakaraensis (strain KOD1)</name>
    <dbReference type="NCBI Taxonomy" id="69014"/>
    <lineage>
        <taxon>Archaea</taxon>
        <taxon>Methanobacteriati</taxon>
        <taxon>Methanobacteriota</taxon>
        <taxon>Thermococci</taxon>
        <taxon>Thermococcales</taxon>
        <taxon>Thermococcaceae</taxon>
        <taxon>Thermococcus</taxon>
    </lineage>
</organism>
<sequence>MVDMSNVKLRIENIVASVDLFTDLNLEKVIEICPSSKYNPEEFPGIICRFDDPKVALLIFSSGKLVVTGAKSVDDIKRAVYKLIEMLKKIGAKFTREPQIDIQNMVFSGDIGMEFNLDAVALILPNCEYEPEQFPGVIYRVKEPRAVILLFSSGKIVCSGAKSEQDAWEAVKKLLRELEKYGLIEEEEEW</sequence>
<accession>Q52366</accession>
<reference key="1">
    <citation type="journal article" date="1995" name="Gene">
        <title>An abnormally acidic TATA-binding protein from a hyperthermophilic archaeon.</title>
        <authorList>
            <person name="Rashid N."/>
            <person name="Morikawa M."/>
            <person name="Imanaka T."/>
        </authorList>
    </citation>
    <scope>NUCLEOTIDE SEQUENCE [GENOMIC DNA]</scope>
    <source>
        <strain>ATCC BAA-918 / JCM 12380 / KOD1</strain>
    </source>
</reference>
<reference key="2">
    <citation type="journal article" date="2005" name="Genome Res.">
        <title>Complete genome sequence of the hyperthermophilic archaeon Thermococcus kodakaraensis KOD1 and comparison with Pyrococcus genomes.</title>
        <authorList>
            <person name="Fukui T."/>
            <person name="Atomi H."/>
            <person name="Kanai T."/>
            <person name="Matsumi R."/>
            <person name="Fujiwara S."/>
            <person name="Imanaka T."/>
        </authorList>
    </citation>
    <scope>NUCLEOTIDE SEQUENCE [LARGE SCALE GENOMIC DNA]</scope>
    <source>
        <strain>ATCC BAA-918 / JCM 12380 / KOD1</strain>
    </source>
</reference>
<feature type="chain" id="PRO_0000154021" description="TATA-box-binding protein">
    <location>
        <begin position="1"/>
        <end position="190"/>
    </location>
</feature>
<feature type="repeat" description="1">
    <location>
        <begin position="11"/>
        <end position="87"/>
    </location>
</feature>
<feature type="repeat" description="2">
    <location>
        <begin position="102"/>
        <end position="178"/>
    </location>
</feature>
<proteinExistence type="inferred from homology"/>
<comment type="function">
    <text>General factor that plays a role in the activation of archaeal genes transcribed by RNA polymerase. Binds specifically to the TATA box promoter element which lies close to the position of transcription initiation.</text>
</comment>
<comment type="similarity">
    <text evidence="1">Belongs to the TBP family.</text>
</comment>
<gene>
    <name type="primary">tbp</name>
    <name type="ordered locus">TK0132</name>
</gene>